<name>SYI_LEPBL</name>
<proteinExistence type="inferred from homology"/>
<accession>Q053V3</accession>
<organism>
    <name type="scientific">Leptospira borgpetersenii serovar Hardjo-bovis (strain L550)</name>
    <dbReference type="NCBI Taxonomy" id="355276"/>
    <lineage>
        <taxon>Bacteria</taxon>
        <taxon>Pseudomonadati</taxon>
        <taxon>Spirochaetota</taxon>
        <taxon>Spirochaetia</taxon>
        <taxon>Leptospirales</taxon>
        <taxon>Leptospiraceae</taxon>
        <taxon>Leptospira</taxon>
    </lineage>
</organism>
<comment type="function">
    <text evidence="1">Catalyzes the attachment of isoleucine to tRNA(Ile). As IleRS can inadvertently accommodate and process structurally similar amino acids such as valine, to avoid such errors it has two additional distinct tRNA(Ile)-dependent editing activities. One activity is designated as 'pretransfer' editing and involves the hydrolysis of activated Val-AMP. The other activity is designated 'posttransfer' editing and involves deacylation of mischarged Val-tRNA(Ile).</text>
</comment>
<comment type="catalytic activity">
    <reaction evidence="1">
        <text>tRNA(Ile) + L-isoleucine + ATP = L-isoleucyl-tRNA(Ile) + AMP + diphosphate</text>
        <dbReference type="Rhea" id="RHEA:11060"/>
        <dbReference type="Rhea" id="RHEA-COMP:9666"/>
        <dbReference type="Rhea" id="RHEA-COMP:9695"/>
        <dbReference type="ChEBI" id="CHEBI:30616"/>
        <dbReference type="ChEBI" id="CHEBI:33019"/>
        <dbReference type="ChEBI" id="CHEBI:58045"/>
        <dbReference type="ChEBI" id="CHEBI:78442"/>
        <dbReference type="ChEBI" id="CHEBI:78528"/>
        <dbReference type="ChEBI" id="CHEBI:456215"/>
        <dbReference type="EC" id="6.1.1.5"/>
    </reaction>
</comment>
<comment type="cofactor">
    <cofactor evidence="1">
        <name>Zn(2+)</name>
        <dbReference type="ChEBI" id="CHEBI:29105"/>
    </cofactor>
    <text evidence="1">Binds 1 zinc ion per subunit.</text>
</comment>
<comment type="subunit">
    <text evidence="1">Monomer.</text>
</comment>
<comment type="subcellular location">
    <subcellularLocation>
        <location evidence="1">Cytoplasm</location>
    </subcellularLocation>
</comment>
<comment type="domain">
    <text evidence="1">IleRS has two distinct active sites: one for aminoacylation and one for editing. The misactivated valine is translocated from the active site to the editing site, which sterically excludes the correctly activated isoleucine. The single editing site contains two valyl binding pockets, one specific for each substrate (Val-AMP or Val-tRNA(Ile)).</text>
</comment>
<comment type="similarity">
    <text evidence="1">Belongs to the class-I aminoacyl-tRNA synthetase family. IleS type 1 subfamily.</text>
</comment>
<keyword id="KW-0030">Aminoacyl-tRNA synthetase</keyword>
<keyword id="KW-0067">ATP-binding</keyword>
<keyword id="KW-0963">Cytoplasm</keyword>
<keyword id="KW-0436">Ligase</keyword>
<keyword id="KW-0479">Metal-binding</keyword>
<keyword id="KW-0547">Nucleotide-binding</keyword>
<keyword id="KW-0648">Protein biosynthesis</keyword>
<keyword id="KW-0862">Zinc</keyword>
<evidence type="ECO:0000255" key="1">
    <source>
        <dbReference type="HAMAP-Rule" id="MF_02002"/>
    </source>
</evidence>
<reference key="1">
    <citation type="journal article" date="2006" name="Proc. Natl. Acad. Sci. U.S.A.">
        <title>Genome reduction in Leptospira borgpetersenii reflects limited transmission potential.</title>
        <authorList>
            <person name="Bulach D.M."/>
            <person name="Zuerner R.L."/>
            <person name="Wilson P."/>
            <person name="Seemann T."/>
            <person name="McGrath A."/>
            <person name="Cullen P.A."/>
            <person name="Davis J."/>
            <person name="Johnson M."/>
            <person name="Kuczek E."/>
            <person name="Alt D.P."/>
            <person name="Peterson-Burch B."/>
            <person name="Coppel R.L."/>
            <person name="Rood J.I."/>
            <person name="Davies J.K."/>
            <person name="Adler B."/>
        </authorList>
    </citation>
    <scope>NUCLEOTIDE SEQUENCE [LARGE SCALE GENOMIC DNA]</scope>
    <source>
        <strain>L550</strain>
    </source>
</reference>
<sequence length="914" mass="104458">MSETQKENPYSSTVLLPKTDFPMKADLAKREPEQIRSWKQNRIFRKMREQRSGKKEFVLHDGPPYANGNFHLGHALNKILKDTIIKSKSLAGFYADMIPGWDCHGLPIEVQVLKNLGKKVRETGPEELRQLCRKYAEEFVGKQGDDLSRFLCFWDEGRIYKTMSPDFEAKIVEVFGELFKKGYVYRGKKPVYWSIDLATAHAEAEIEYYPHISPSIYVKFPIIGEKKRFCLIWTTTPWTLPANLAICFNRKIEYSIFKTESSEELILADALAENVTITTGVALTKLKPITSEELAALKFQHPFVDRISVSLFGDHVTLEAGTGCVHTAPGHGQDDYKVGLAAGLEPFSPVDDYGRYTDEFPLMQGKKVFDANPEIIQLLRDKGLLLYHGELEHSYPHSWRSKKPLIFRATPQWFFKIDFQDLREKSLSAIDGVRWIPSWGITRIRSMVETRPDWCLSRQRNWGVPIPAFTCESCGQTHIDDASIQFFTKMVREKGIEIWYSEETKDLLPPKTKCGKCGNDSFKKGNDILDVWFDSGVSNFSVLGERKDEPPADLYLEGSDQHRGWFQSSLWPSMALRGIPPYKAVLTHGYVLDEKGRAMSKSLGNGIDPTADIIQVYGADILRLWVSSLDFRDDIKVGKESLKIVSEQYRKIRNTFRYLLGNLDGHTPEQNLPFEELEELDRFYLSKLAGFVEDAVASYETYQFHQIYQKLILFCTVTLSQDYFDMIRDRMYCDLRDSKSRRSSSTALQYILDSLCILVAPILSFTAEEVWTSNGKKDSVFLQTFPDLKSWKNQSLEDKFESALQAREVVQKALEIARQEGKLGKSLEAALEIVSKSGLSFGELLPKETLELLFVVSQIHEENPGMEVLSSHENEKFSVKVLKPLQGECPRCWRHTEDISKEGDLCGRCKSVVA</sequence>
<feature type="chain" id="PRO_1000022089" description="Isoleucine--tRNA ligase">
    <location>
        <begin position="1"/>
        <end position="914"/>
    </location>
</feature>
<feature type="short sequence motif" description="'HIGH' region">
    <location>
        <begin position="64"/>
        <end position="74"/>
    </location>
</feature>
<feature type="short sequence motif" description="'KMSKS' region">
    <location>
        <begin position="598"/>
        <end position="602"/>
    </location>
</feature>
<feature type="binding site" evidence="1">
    <location>
        <position position="557"/>
    </location>
    <ligand>
        <name>L-isoleucyl-5'-AMP</name>
        <dbReference type="ChEBI" id="CHEBI:178002"/>
    </ligand>
</feature>
<feature type="binding site" evidence="1">
    <location>
        <position position="601"/>
    </location>
    <ligand>
        <name>ATP</name>
        <dbReference type="ChEBI" id="CHEBI:30616"/>
    </ligand>
</feature>
<feature type="binding site" evidence="1">
    <location>
        <position position="889"/>
    </location>
    <ligand>
        <name>Zn(2+)</name>
        <dbReference type="ChEBI" id="CHEBI:29105"/>
    </ligand>
</feature>
<feature type="binding site" evidence="1">
    <location>
        <position position="892"/>
    </location>
    <ligand>
        <name>Zn(2+)</name>
        <dbReference type="ChEBI" id="CHEBI:29105"/>
    </ligand>
</feature>
<feature type="binding site" evidence="1">
    <location>
        <position position="906"/>
    </location>
    <ligand>
        <name>Zn(2+)</name>
        <dbReference type="ChEBI" id="CHEBI:29105"/>
    </ligand>
</feature>
<feature type="binding site" evidence="1">
    <location>
        <position position="909"/>
    </location>
    <ligand>
        <name>Zn(2+)</name>
        <dbReference type="ChEBI" id="CHEBI:29105"/>
    </ligand>
</feature>
<dbReference type="EC" id="6.1.1.5" evidence="1"/>
<dbReference type="EMBL" id="CP000348">
    <property type="protein sequence ID" value="ABJ78392.1"/>
    <property type="molecule type" value="Genomic_DNA"/>
</dbReference>
<dbReference type="RefSeq" id="WP_011669695.1">
    <property type="nucleotide sequence ID" value="NC_008508.1"/>
</dbReference>
<dbReference type="SMR" id="Q053V3"/>
<dbReference type="KEGG" id="lbl:LBL_0837"/>
<dbReference type="HOGENOM" id="CLU_001493_7_0_12"/>
<dbReference type="GO" id="GO:0005829">
    <property type="term" value="C:cytosol"/>
    <property type="evidence" value="ECO:0007669"/>
    <property type="project" value="TreeGrafter"/>
</dbReference>
<dbReference type="GO" id="GO:0002161">
    <property type="term" value="F:aminoacyl-tRNA deacylase activity"/>
    <property type="evidence" value="ECO:0007669"/>
    <property type="project" value="InterPro"/>
</dbReference>
<dbReference type="GO" id="GO:0005524">
    <property type="term" value="F:ATP binding"/>
    <property type="evidence" value="ECO:0007669"/>
    <property type="project" value="UniProtKB-UniRule"/>
</dbReference>
<dbReference type="GO" id="GO:0004822">
    <property type="term" value="F:isoleucine-tRNA ligase activity"/>
    <property type="evidence" value="ECO:0007669"/>
    <property type="project" value="UniProtKB-UniRule"/>
</dbReference>
<dbReference type="GO" id="GO:0000049">
    <property type="term" value="F:tRNA binding"/>
    <property type="evidence" value="ECO:0007669"/>
    <property type="project" value="InterPro"/>
</dbReference>
<dbReference type="GO" id="GO:0008270">
    <property type="term" value="F:zinc ion binding"/>
    <property type="evidence" value="ECO:0007669"/>
    <property type="project" value="UniProtKB-UniRule"/>
</dbReference>
<dbReference type="GO" id="GO:0006428">
    <property type="term" value="P:isoleucyl-tRNA aminoacylation"/>
    <property type="evidence" value="ECO:0007669"/>
    <property type="project" value="UniProtKB-UniRule"/>
</dbReference>
<dbReference type="CDD" id="cd07960">
    <property type="entry name" value="Anticodon_Ia_Ile_BEm"/>
    <property type="match status" value="1"/>
</dbReference>
<dbReference type="CDD" id="cd00818">
    <property type="entry name" value="IleRS_core"/>
    <property type="match status" value="1"/>
</dbReference>
<dbReference type="Gene3D" id="1.10.730.20">
    <property type="match status" value="1"/>
</dbReference>
<dbReference type="Gene3D" id="3.40.50.620">
    <property type="entry name" value="HUPs"/>
    <property type="match status" value="2"/>
</dbReference>
<dbReference type="Gene3D" id="1.10.10.830">
    <property type="entry name" value="Ile-tRNA synthetase CP2 domain-like"/>
    <property type="match status" value="1"/>
</dbReference>
<dbReference type="Gene3D" id="3.90.740.10">
    <property type="entry name" value="Valyl/Leucyl/Isoleucyl-tRNA synthetase, editing domain"/>
    <property type="match status" value="1"/>
</dbReference>
<dbReference type="HAMAP" id="MF_02002">
    <property type="entry name" value="Ile_tRNA_synth_type1"/>
    <property type="match status" value="1"/>
</dbReference>
<dbReference type="InterPro" id="IPR001412">
    <property type="entry name" value="aa-tRNA-synth_I_CS"/>
</dbReference>
<dbReference type="InterPro" id="IPR002300">
    <property type="entry name" value="aa-tRNA-synth_Ia"/>
</dbReference>
<dbReference type="InterPro" id="IPR033708">
    <property type="entry name" value="Anticodon_Ile_BEm"/>
</dbReference>
<dbReference type="InterPro" id="IPR002301">
    <property type="entry name" value="Ile-tRNA-ligase"/>
</dbReference>
<dbReference type="InterPro" id="IPR023585">
    <property type="entry name" value="Ile-tRNA-ligase_type1"/>
</dbReference>
<dbReference type="InterPro" id="IPR050081">
    <property type="entry name" value="Ile-tRNA_ligase"/>
</dbReference>
<dbReference type="InterPro" id="IPR013155">
    <property type="entry name" value="M/V/L/I-tRNA-synth_anticd-bd"/>
</dbReference>
<dbReference type="InterPro" id="IPR014729">
    <property type="entry name" value="Rossmann-like_a/b/a_fold"/>
</dbReference>
<dbReference type="InterPro" id="IPR009080">
    <property type="entry name" value="tRNAsynth_Ia_anticodon-bd"/>
</dbReference>
<dbReference type="InterPro" id="IPR009008">
    <property type="entry name" value="Val/Leu/Ile-tRNA-synth_edit"/>
</dbReference>
<dbReference type="InterPro" id="IPR010663">
    <property type="entry name" value="Znf_FPG/IleRS"/>
</dbReference>
<dbReference type="NCBIfam" id="TIGR00392">
    <property type="entry name" value="ileS"/>
    <property type="match status" value="1"/>
</dbReference>
<dbReference type="PANTHER" id="PTHR42765:SF1">
    <property type="entry name" value="ISOLEUCINE--TRNA LIGASE, MITOCHONDRIAL"/>
    <property type="match status" value="1"/>
</dbReference>
<dbReference type="PANTHER" id="PTHR42765">
    <property type="entry name" value="SOLEUCYL-TRNA SYNTHETASE"/>
    <property type="match status" value="1"/>
</dbReference>
<dbReference type="Pfam" id="PF08264">
    <property type="entry name" value="Anticodon_1"/>
    <property type="match status" value="1"/>
</dbReference>
<dbReference type="Pfam" id="PF00133">
    <property type="entry name" value="tRNA-synt_1"/>
    <property type="match status" value="1"/>
</dbReference>
<dbReference type="Pfam" id="PF06827">
    <property type="entry name" value="zf-FPG_IleRS"/>
    <property type="match status" value="1"/>
</dbReference>
<dbReference type="PRINTS" id="PR00984">
    <property type="entry name" value="TRNASYNTHILE"/>
</dbReference>
<dbReference type="SUPFAM" id="SSF47323">
    <property type="entry name" value="Anticodon-binding domain of a subclass of class I aminoacyl-tRNA synthetases"/>
    <property type="match status" value="1"/>
</dbReference>
<dbReference type="SUPFAM" id="SSF52374">
    <property type="entry name" value="Nucleotidylyl transferase"/>
    <property type="match status" value="1"/>
</dbReference>
<dbReference type="SUPFAM" id="SSF50677">
    <property type="entry name" value="ValRS/IleRS/LeuRS editing domain"/>
    <property type="match status" value="1"/>
</dbReference>
<dbReference type="PROSITE" id="PS00178">
    <property type="entry name" value="AA_TRNA_LIGASE_I"/>
    <property type="match status" value="1"/>
</dbReference>
<protein>
    <recommendedName>
        <fullName evidence="1">Isoleucine--tRNA ligase</fullName>
        <ecNumber evidence="1">6.1.1.5</ecNumber>
    </recommendedName>
    <alternativeName>
        <fullName evidence="1">Isoleucyl-tRNA synthetase</fullName>
        <shortName evidence="1">IleRS</shortName>
    </alternativeName>
</protein>
<gene>
    <name evidence="1" type="primary">ileS</name>
    <name type="ordered locus">LBL_0837</name>
</gene>